<geneLocation type="chloroplast"/>
<feature type="chain" id="PRO_0000355418" description="Cytochrome b6-f complex subunit 8">
    <location>
        <begin position="1"/>
        <end position="29"/>
    </location>
</feature>
<feature type="transmembrane region" description="Helical" evidence="1">
    <location>
        <begin position="3"/>
        <end position="23"/>
    </location>
</feature>
<proteinExistence type="inferred from homology"/>
<sequence length="29" mass="3170">MDIVSLAWAALMVVFTFSLSLVVWGRSGL</sequence>
<keyword id="KW-0150">Chloroplast</keyword>
<keyword id="KW-0249">Electron transport</keyword>
<keyword id="KW-0472">Membrane</keyword>
<keyword id="KW-0602">Photosynthesis</keyword>
<keyword id="KW-0934">Plastid</keyword>
<keyword id="KW-0793">Thylakoid</keyword>
<keyword id="KW-0812">Transmembrane</keyword>
<keyword id="KW-1133">Transmembrane helix</keyword>
<keyword id="KW-0813">Transport</keyword>
<gene>
    <name evidence="1" type="primary">petN</name>
</gene>
<name>PETN_AETGR</name>
<organism>
    <name type="scientific">Aethionema grandiflorum</name>
    <name type="common">Persian stone-cress</name>
    <dbReference type="NCBI Taxonomy" id="72657"/>
    <lineage>
        <taxon>Eukaryota</taxon>
        <taxon>Viridiplantae</taxon>
        <taxon>Streptophyta</taxon>
        <taxon>Embryophyta</taxon>
        <taxon>Tracheophyta</taxon>
        <taxon>Spermatophyta</taxon>
        <taxon>Magnoliopsida</taxon>
        <taxon>eudicotyledons</taxon>
        <taxon>Gunneridae</taxon>
        <taxon>Pentapetalae</taxon>
        <taxon>rosids</taxon>
        <taxon>malvids</taxon>
        <taxon>Brassicales</taxon>
        <taxon>Brassicaceae</taxon>
        <taxon>Aethionemeae</taxon>
        <taxon>Aethionema</taxon>
    </lineage>
</organism>
<accession>A4QJJ2</accession>
<protein>
    <recommendedName>
        <fullName evidence="1">Cytochrome b6-f complex subunit 8</fullName>
    </recommendedName>
    <alternativeName>
        <fullName evidence="1">Cytochrome b6-f complex subunit PetN</fullName>
    </alternativeName>
    <alternativeName>
        <fullName evidence="1">Cytochrome b6-f complex subunit VIII</fullName>
    </alternativeName>
</protein>
<dbReference type="EMBL" id="AP009367">
    <property type="protein sequence ID" value="BAF49847.1"/>
    <property type="molecule type" value="Genomic_DNA"/>
</dbReference>
<dbReference type="RefSeq" id="YP_001123023.1">
    <property type="nucleotide sequence ID" value="NC_009266.1"/>
</dbReference>
<dbReference type="SMR" id="A4QJJ2"/>
<dbReference type="GeneID" id="4962235"/>
<dbReference type="GO" id="GO:0009535">
    <property type="term" value="C:chloroplast thylakoid membrane"/>
    <property type="evidence" value="ECO:0007669"/>
    <property type="project" value="UniProtKB-SubCell"/>
</dbReference>
<dbReference type="GO" id="GO:0009512">
    <property type="term" value="C:cytochrome b6f complex"/>
    <property type="evidence" value="ECO:0007669"/>
    <property type="project" value="InterPro"/>
</dbReference>
<dbReference type="GO" id="GO:0045158">
    <property type="term" value="F:electron transporter, transferring electrons within cytochrome b6/f complex of photosystem II activity"/>
    <property type="evidence" value="ECO:0007669"/>
    <property type="project" value="InterPro"/>
</dbReference>
<dbReference type="GO" id="GO:0017004">
    <property type="term" value="P:cytochrome complex assembly"/>
    <property type="evidence" value="ECO:0007669"/>
    <property type="project" value="UniProtKB-UniRule"/>
</dbReference>
<dbReference type="GO" id="GO:0015979">
    <property type="term" value="P:photosynthesis"/>
    <property type="evidence" value="ECO:0007669"/>
    <property type="project" value="UniProtKB-KW"/>
</dbReference>
<dbReference type="HAMAP" id="MF_00395">
    <property type="entry name" value="Cytb6_f_PetN"/>
    <property type="match status" value="1"/>
</dbReference>
<dbReference type="InterPro" id="IPR036143">
    <property type="entry name" value="Cytochr_b6-f_cplx_su8_sf"/>
</dbReference>
<dbReference type="InterPro" id="IPR005497">
    <property type="entry name" value="Cytochrome_b6-f_cplx_su8"/>
</dbReference>
<dbReference type="Pfam" id="PF03742">
    <property type="entry name" value="PetN"/>
    <property type="match status" value="1"/>
</dbReference>
<dbReference type="SUPFAM" id="SSF103451">
    <property type="entry name" value="PetN subunit of the cytochrome b6f complex"/>
    <property type="match status" value="1"/>
</dbReference>
<evidence type="ECO:0000255" key="1">
    <source>
        <dbReference type="HAMAP-Rule" id="MF_00395"/>
    </source>
</evidence>
<comment type="function">
    <text evidence="1">Component of the cytochrome b6-f complex, which mediates electron transfer between photosystem II (PSII) and photosystem I (PSI), cyclic electron flow around PSI, and state transitions.</text>
</comment>
<comment type="subunit">
    <text evidence="1">The 4 large subunits of the cytochrome b6-f complex are cytochrome b6, subunit IV (17 kDa polypeptide, PetD), cytochrome f and the Rieske protein, while the 4 small subunits are PetG, PetL, PetM and PetN. The complex functions as a dimer.</text>
</comment>
<comment type="subcellular location">
    <subcellularLocation>
        <location evidence="1">Plastid</location>
        <location evidence="1">Chloroplast thylakoid membrane</location>
        <topology evidence="1">Single-pass membrane protein</topology>
    </subcellularLocation>
</comment>
<comment type="similarity">
    <text evidence="1">Belongs to the PetN family.</text>
</comment>
<reference key="1">
    <citation type="submission" date="2007-03" db="EMBL/GenBank/DDBJ databases">
        <title>Sequencing analysis of Aethionema grandiflorum chloroplast DNA.</title>
        <authorList>
            <person name="Hosouchi T."/>
            <person name="Tsuruoka H."/>
            <person name="Kotani H."/>
        </authorList>
    </citation>
    <scope>NUCLEOTIDE SEQUENCE [LARGE SCALE GENOMIC DNA]</scope>
</reference>